<comment type="function">
    <text evidence="1">ATPase subunit of a proteasome-like degradation complex; this subunit has chaperone activity. The binding of ATP and its subsequent hydrolysis by HslU are essential for unfolding of protein substrates subsequently hydrolyzed by HslV. HslU recognizes the N-terminal part of its protein substrates and unfolds these before they are guided to HslV for hydrolysis.</text>
</comment>
<comment type="subunit">
    <text evidence="1">A double ring-shaped homohexamer of HslV is capped on each side by a ring-shaped HslU homohexamer. The assembly of the HslU/HslV complex is dependent on binding of ATP.</text>
</comment>
<comment type="subcellular location">
    <subcellularLocation>
        <location evidence="1">Cytoplasm</location>
    </subcellularLocation>
</comment>
<comment type="similarity">
    <text evidence="1">Belongs to the ClpX chaperone family. HslU subfamily.</text>
</comment>
<feature type="chain" id="PRO_1000012833" description="ATP-dependent protease ATPase subunit HslU">
    <location>
        <begin position="1"/>
        <end position="443"/>
    </location>
</feature>
<feature type="binding site" evidence="1">
    <location>
        <position position="18"/>
    </location>
    <ligand>
        <name>ATP</name>
        <dbReference type="ChEBI" id="CHEBI:30616"/>
    </ligand>
</feature>
<feature type="binding site" evidence="1">
    <location>
        <begin position="60"/>
        <end position="65"/>
    </location>
    <ligand>
        <name>ATP</name>
        <dbReference type="ChEBI" id="CHEBI:30616"/>
    </ligand>
</feature>
<feature type="binding site" evidence="1">
    <location>
        <position position="256"/>
    </location>
    <ligand>
        <name>ATP</name>
        <dbReference type="ChEBI" id="CHEBI:30616"/>
    </ligand>
</feature>
<feature type="binding site" evidence="1">
    <location>
        <position position="321"/>
    </location>
    <ligand>
        <name>ATP</name>
        <dbReference type="ChEBI" id="CHEBI:30616"/>
    </ligand>
</feature>
<feature type="binding site" evidence="1">
    <location>
        <position position="393"/>
    </location>
    <ligand>
        <name>ATP</name>
        <dbReference type="ChEBI" id="CHEBI:30616"/>
    </ligand>
</feature>
<name>HSLU_YERPA</name>
<protein>
    <recommendedName>
        <fullName evidence="1">ATP-dependent protease ATPase subunit HslU</fullName>
    </recommendedName>
    <alternativeName>
        <fullName evidence="1">Unfoldase HslU</fullName>
    </alternativeName>
</protein>
<reference key="1">
    <citation type="journal article" date="2006" name="J. Bacteriol.">
        <title>Complete genome sequence of Yersinia pestis strains Antiqua and Nepal516: evidence of gene reduction in an emerging pathogen.</title>
        <authorList>
            <person name="Chain P.S.G."/>
            <person name="Hu P."/>
            <person name="Malfatti S.A."/>
            <person name="Radnedge L."/>
            <person name="Larimer F."/>
            <person name="Vergez L.M."/>
            <person name="Worsham P."/>
            <person name="Chu M.C."/>
            <person name="Andersen G.L."/>
        </authorList>
    </citation>
    <scope>NUCLEOTIDE SEQUENCE [LARGE SCALE GENOMIC DNA]</scope>
    <source>
        <strain>Antiqua</strain>
    </source>
</reference>
<evidence type="ECO:0000255" key="1">
    <source>
        <dbReference type="HAMAP-Rule" id="MF_00249"/>
    </source>
</evidence>
<organism>
    <name type="scientific">Yersinia pestis bv. Antiqua (strain Antiqua)</name>
    <dbReference type="NCBI Taxonomy" id="360102"/>
    <lineage>
        <taxon>Bacteria</taxon>
        <taxon>Pseudomonadati</taxon>
        <taxon>Pseudomonadota</taxon>
        <taxon>Gammaproteobacteria</taxon>
        <taxon>Enterobacterales</taxon>
        <taxon>Yersiniaceae</taxon>
        <taxon>Yersinia</taxon>
    </lineage>
</organism>
<keyword id="KW-0067">ATP-binding</keyword>
<keyword id="KW-0143">Chaperone</keyword>
<keyword id="KW-0963">Cytoplasm</keyword>
<keyword id="KW-0547">Nucleotide-binding</keyword>
<keyword id="KW-0346">Stress response</keyword>
<dbReference type="EMBL" id="CP000308">
    <property type="protein sequence ID" value="ABG12224.1"/>
    <property type="molecule type" value="Genomic_DNA"/>
</dbReference>
<dbReference type="RefSeq" id="WP_002208943.1">
    <property type="nucleotide sequence ID" value="NZ_CP009906.1"/>
</dbReference>
<dbReference type="SMR" id="Q1CBE8"/>
<dbReference type="GeneID" id="96663576"/>
<dbReference type="KEGG" id="ypa:YPA_0255"/>
<dbReference type="Proteomes" id="UP000001971">
    <property type="component" value="Chromosome"/>
</dbReference>
<dbReference type="GO" id="GO:0009376">
    <property type="term" value="C:HslUV protease complex"/>
    <property type="evidence" value="ECO:0007669"/>
    <property type="project" value="UniProtKB-UniRule"/>
</dbReference>
<dbReference type="GO" id="GO:0005524">
    <property type="term" value="F:ATP binding"/>
    <property type="evidence" value="ECO:0007669"/>
    <property type="project" value="UniProtKB-UniRule"/>
</dbReference>
<dbReference type="GO" id="GO:0016887">
    <property type="term" value="F:ATP hydrolysis activity"/>
    <property type="evidence" value="ECO:0007669"/>
    <property type="project" value="InterPro"/>
</dbReference>
<dbReference type="GO" id="GO:0008233">
    <property type="term" value="F:peptidase activity"/>
    <property type="evidence" value="ECO:0007669"/>
    <property type="project" value="InterPro"/>
</dbReference>
<dbReference type="GO" id="GO:0036402">
    <property type="term" value="F:proteasome-activating activity"/>
    <property type="evidence" value="ECO:0007669"/>
    <property type="project" value="UniProtKB-UniRule"/>
</dbReference>
<dbReference type="GO" id="GO:0043335">
    <property type="term" value="P:protein unfolding"/>
    <property type="evidence" value="ECO:0007669"/>
    <property type="project" value="UniProtKB-UniRule"/>
</dbReference>
<dbReference type="GO" id="GO:0051603">
    <property type="term" value="P:proteolysis involved in protein catabolic process"/>
    <property type="evidence" value="ECO:0007669"/>
    <property type="project" value="TreeGrafter"/>
</dbReference>
<dbReference type="CDD" id="cd19498">
    <property type="entry name" value="RecA-like_HslU"/>
    <property type="match status" value="1"/>
</dbReference>
<dbReference type="FunFam" id="1.10.8.10:FF:000028">
    <property type="entry name" value="ATP-dependent protease ATPase subunit HslU"/>
    <property type="match status" value="2"/>
</dbReference>
<dbReference type="FunFam" id="1.10.8.60:FF:000027">
    <property type="entry name" value="ATP-dependent protease ATPase subunit HslU"/>
    <property type="match status" value="1"/>
</dbReference>
<dbReference type="FunFam" id="3.40.50.300:FF:000213">
    <property type="entry name" value="ATP-dependent protease ATPase subunit HslU"/>
    <property type="match status" value="1"/>
</dbReference>
<dbReference type="FunFam" id="3.40.50.300:FF:000220">
    <property type="entry name" value="ATP-dependent protease ATPase subunit HslU"/>
    <property type="match status" value="1"/>
</dbReference>
<dbReference type="Gene3D" id="1.10.8.60">
    <property type="match status" value="1"/>
</dbReference>
<dbReference type="Gene3D" id="1.10.8.10">
    <property type="entry name" value="DNA helicase RuvA subunit, C-terminal domain"/>
    <property type="match status" value="1"/>
</dbReference>
<dbReference type="Gene3D" id="3.40.50.300">
    <property type="entry name" value="P-loop containing nucleotide triphosphate hydrolases"/>
    <property type="match status" value="2"/>
</dbReference>
<dbReference type="HAMAP" id="MF_00249">
    <property type="entry name" value="HslU"/>
    <property type="match status" value="1"/>
</dbReference>
<dbReference type="InterPro" id="IPR003593">
    <property type="entry name" value="AAA+_ATPase"/>
</dbReference>
<dbReference type="InterPro" id="IPR050052">
    <property type="entry name" value="ATP-dep_Clp_protease_ClpX"/>
</dbReference>
<dbReference type="InterPro" id="IPR003959">
    <property type="entry name" value="ATPase_AAA_core"/>
</dbReference>
<dbReference type="InterPro" id="IPR019489">
    <property type="entry name" value="Clp_ATPase_C"/>
</dbReference>
<dbReference type="InterPro" id="IPR004491">
    <property type="entry name" value="HslU"/>
</dbReference>
<dbReference type="InterPro" id="IPR027417">
    <property type="entry name" value="P-loop_NTPase"/>
</dbReference>
<dbReference type="NCBIfam" id="TIGR00390">
    <property type="entry name" value="hslU"/>
    <property type="match status" value="1"/>
</dbReference>
<dbReference type="NCBIfam" id="NF003544">
    <property type="entry name" value="PRK05201.1"/>
    <property type="match status" value="1"/>
</dbReference>
<dbReference type="PANTHER" id="PTHR48102">
    <property type="entry name" value="ATP-DEPENDENT CLP PROTEASE ATP-BINDING SUBUNIT CLPX-LIKE, MITOCHONDRIAL-RELATED"/>
    <property type="match status" value="1"/>
</dbReference>
<dbReference type="PANTHER" id="PTHR48102:SF3">
    <property type="entry name" value="ATP-DEPENDENT PROTEASE ATPASE SUBUNIT HSLU"/>
    <property type="match status" value="1"/>
</dbReference>
<dbReference type="Pfam" id="PF00004">
    <property type="entry name" value="AAA"/>
    <property type="match status" value="1"/>
</dbReference>
<dbReference type="Pfam" id="PF07724">
    <property type="entry name" value="AAA_2"/>
    <property type="match status" value="1"/>
</dbReference>
<dbReference type="SMART" id="SM00382">
    <property type="entry name" value="AAA"/>
    <property type="match status" value="1"/>
</dbReference>
<dbReference type="SMART" id="SM01086">
    <property type="entry name" value="ClpB_D2-small"/>
    <property type="match status" value="1"/>
</dbReference>
<dbReference type="SUPFAM" id="SSF52540">
    <property type="entry name" value="P-loop containing nucleoside triphosphate hydrolases"/>
    <property type="match status" value="1"/>
</dbReference>
<sequence>MSEMTPREIVSELDSHIIGQDKAKRAVAIALRNRWRRMQLNEELRHEVTPKNILMIGPTGVGKTEIARRLAKLANAPFIKVEATKFTEVGYVGKEVDSIIRDLTDAAVKMVRHQSIEKMRYRAEELAEERILDVLIPPAKNNWGVPDESQEPSATRQTFRKKLREGQLDDKEIEIDLAAAPMGVEIMAPPGMEEMTNQLQSMFQNIAGQKQKPRKIKIKEALKLLIEEEAAKLVNPEELKQQAIDAVEQHGIVFIDEIDKICKRGQTSGPDVSREGVQRDLLPLVEGCTVSTKHGMVKTDHILFIASGAFQVSSPSDLIPELQGRLPIRVELQALTTDDFERILTEPSASLTEQYKALMATEGVTIEFTREGIRKIAEAAWQVNERTENIGARRLHTVLERLMEDISYDASESSGQSITIDAEYVGKHLDELVADEDLSRFIL</sequence>
<proteinExistence type="inferred from homology"/>
<gene>
    <name evidence="1" type="primary">hslU</name>
    <name type="ordered locus">YPA_0255</name>
</gene>
<accession>Q1CBE8</accession>